<name>WRM1_CAEBR</name>
<keyword id="KW-0010">Activator</keyword>
<keyword id="KW-0963">Cytoplasm</keyword>
<keyword id="KW-0217">Developmental protein</keyword>
<keyword id="KW-0539">Nucleus</keyword>
<keyword id="KW-1185">Reference proteome</keyword>
<keyword id="KW-0804">Transcription</keyword>
<keyword id="KW-0805">Transcription regulation</keyword>
<keyword id="KW-0879">Wnt signaling pathway</keyword>
<evidence type="ECO:0000250" key="1">
    <source>
        <dbReference type="UniProtKB" id="Q10953"/>
    </source>
</evidence>
<evidence type="ECO:0000255" key="2"/>
<evidence type="ECO:0000256" key="3">
    <source>
        <dbReference type="SAM" id="MobiDB-lite"/>
    </source>
</evidence>
<evidence type="ECO:0000312" key="4">
    <source>
        <dbReference type="WormBase" id="CBG09006"/>
    </source>
</evidence>
<gene>
    <name evidence="4" type="primary">wrm-1</name>
    <name evidence="4" type="ORF">CBG09006</name>
</gene>
<sequence length="799" mass="91587">MEERGPDIEKYGSQPCTPLSFDPMLPSTSRVATPVRPSSTLSARQAPASPFRAQPQNMEPSISRVHELREGAAVKRSYTNDWMQGNYIPPNPQQQQYQRPPSMIGSTISNMSNLSHMTKFSALSVNTQCGQFDNWIYQSQPALSKVSHSSVENQDPMKRRERMSIPEIVQSLASYEMSDQVAAIRELEPLAKAEALESTYCQADLGKIINALFEVLVPRPQENENVIRKVFEILHRAAVPKHVRMTEKIFHSLNLELMNTNSSKHSFQVPRPYSIYELVIERASRLDTAYDQAAMLLLAQICCKPFFMKYVFSEKEQSAGHRRLHEVVMQFAIKNLQQQETKRKSKGFCVSIIKNLSRRNRSIWSIVYELHVIPIFHDIIKDEYSDEDLLWPTMQALTTFCSIERVGEDFVKLGGAQDLCNLLYHGSTRLLHELLACMQRLSLLQEIGNQDMEESIRRVIQVVGSDDATIAERATGVLRNIGQPNKQNKVIMVRNGVTAHAIAVLRTSMRFQSQLREQQNARTPKNQIDAAKNQILSIYENCLSILNNVTKMGKDDILDSAIQACRMISANPDAAIVLLHFLNAGAPKCRKLAVNVMKRVIENVPAFAEPFVDLPGTTQETLPILLLKRAYESLDEWKKAVVEVMRSEPNTQQFRDAIEKRQDHEDIVWKSVSLLSNLCRNGNPRFFERVKVEMLYTRPTNPFTSLFPEMSDVILYEWLDFILAICGTEWSLQNCLMYHFLKQANITHEYLLHYRRPNPQICDKIKNIIDTGMRQQQQHNQLEQMAMMHAQQQHQQLPM</sequence>
<feature type="chain" id="PRO_0000342700" description="Armadillo repeat-containing protein wrm-1">
    <location>
        <begin position="1"/>
        <end position="799"/>
    </location>
</feature>
<feature type="repeat" description="ARM" evidence="2">
    <location>
        <begin position="454"/>
        <end position="496"/>
    </location>
</feature>
<feature type="region of interest" description="Disordered" evidence="3">
    <location>
        <begin position="1"/>
        <end position="60"/>
    </location>
</feature>
<feature type="compositionally biased region" description="Basic and acidic residues" evidence="3">
    <location>
        <begin position="1"/>
        <end position="10"/>
    </location>
</feature>
<feature type="compositionally biased region" description="Polar residues" evidence="3">
    <location>
        <begin position="26"/>
        <end position="43"/>
    </location>
</feature>
<reference key="1">
    <citation type="journal article" date="2003" name="PLoS Biol.">
        <title>The genome sequence of Caenorhabditis briggsae: a platform for comparative genomics.</title>
        <authorList>
            <person name="Stein L.D."/>
            <person name="Bao Z."/>
            <person name="Blasiar D."/>
            <person name="Blumenthal T."/>
            <person name="Brent M.R."/>
            <person name="Chen N."/>
            <person name="Chinwalla A."/>
            <person name="Clarke L."/>
            <person name="Clee C."/>
            <person name="Coghlan A."/>
            <person name="Coulson A."/>
            <person name="D'Eustachio P."/>
            <person name="Fitch D.H.A."/>
            <person name="Fulton L.A."/>
            <person name="Fulton R.E."/>
            <person name="Griffiths-Jones S."/>
            <person name="Harris T.W."/>
            <person name="Hillier L.W."/>
            <person name="Kamath R."/>
            <person name="Kuwabara P.E."/>
            <person name="Mardis E.R."/>
            <person name="Marra M.A."/>
            <person name="Miner T.L."/>
            <person name="Minx P."/>
            <person name="Mullikin J.C."/>
            <person name="Plumb R.W."/>
            <person name="Rogers J."/>
            <person name="Schein J.E."/>
            <person name="Sohrmann M."/>
            <person name="Spieth J."/>
            <person name="Stajich J.E."/>
            <person name="Wei C."/>
            <person name="Willey D."/>
            <person name="Wilson R.K."/>
            <person name="Durbin R.M."/>
            <person name="Waterston R.H."/>
        </authorList>
    </citation>
    <scope>NUCLEOTIDE SEQUENCE [LARGE SCALE GENOMIC DNA]</scope>
    <source>
        <strain>AF16</strain>
    </source>
</reference>
<proteinExistence type="inferred from homology"/>
<dbReference type="EMBL" id="HE601284">
    <property type="protein sequence ID" value="CAP28772.3"/>
    <property type="molecule type" value="Genomic_DNA"/>
</dbReference>
<dbReference type="FunCoup" id="A8X811">
    <property type="interactions" value="363"/>
</dbReference>
<dbReference type="STRING" id="6238.A8X811"/>
<dbReference type="EnsemblMetazoa" id="CBG09006.1">
    <property type="protein sequence ID" value="CBG09006.1"/>
    <property type="gene ID" value="WBGene00030681"/>
</dbReference>
<dbReference type="KEGG" id="cbr:CBG_09006"/>
<dbReference type="CTD" id="8583146"/>
<dbReference type="WormBase" id="CBG09006">
    <property type="protein sequence ID" value="CBP08154"/>
    <property type="gene ID" value="WBGene00030681"/>
    <property type="gene designation" value="Cbr-wrm-1"/>
</dbReference>
<dbReference type="eggNOG" id="ENOG502T285">
    <property type="taxonomic scope" value="Eukaryota"/>
</dbReference>
<dbReference type="HOGENOM" id="CLU_352050_0_0_1"/>
<dbReference type="InParanoid" id="A8X811"/>
<dbReference type="OMA" id="QQILVHI"/>
<dbReference type="OrthoDB" id="5808707at2759"/>
<dbReference type="Proteomes" id="UP000008549">
    <property type="component" value="Unassembled WGS sequence"/>
</dbReference>
<dbReference type="GO" id="GO:0005912">
    <property type="term" value="C:adherens junction"/>
    <property type="evidence" value="ECO:0000318"/>
    <property type="project" value="GO_Central"/>
</dbReference>
<dbReference type="GO" id="GO:0016342">
    <property type="term" value="C:catenin complex"/>
    <property type="evidence" value="ECO:0000318"/>
    <property type="project" value="GO_Central"/>
</dbReference>
<dbReference type="GO" id="GO:0005938">
    <property type="term" value="C:cell cortex"/>
    <property type="evidence" value="ECO:0007669"/>
    <property type="project" value="UniProtKB-SubCell"/>
</dbReference>
<dbReference type="GO" id="GO:0005737">
    <property type="term" value="C:cytoplasm"/>
    <property type="evidence" value="ECO:0000250"/>
    <property type="project" value="UniProtKB"/>
</dbReference>
<dbReference type="GO" id="GO:0005634">
    <property type="term" value="C:nucleus"/>
    <property type="evidence" value="ECO:0000250"/>
    <property type="project" value="UniProtKB"/>
</dbReference>
<dbReference type="GO" id="GO:1902554">
    <property type="term" value="C:serine/threonine protein kinase complex"/>
    <property type="evidence" value="ECO:0007669"/>
    <property type="project" value="EnsemblMetazoa"/>
</dbReference>
<dbReference type="GO" id="GO:0045294">
    <property type="term" value="F:alpha-catenin binding"/>
    <property type="evidence" value="ECO:0000318"/>
    <property type="project" value="GO_Central"/>
</dbReference>
<dbReference type="GO" id="GO:0045296">
    <property type="term" value="F:cadherin binding"/>
    <property type="evidence" value="ECO:0000318"/>
    <property type="project" value="GO_Central"/>
</dbReference>
<dbReference type="GO" id="GO:0016922">
    <property type="term" value="F:nuclear receptor binding"/>
    <property type="evidence" value="ECO:0000250"/>
    <property type="project" value="UniProtKB"/>
</dbReference>
<dbReference type="GO" id="GO:0004672">
    <property type="term" value="F:protein kinase activity"/>
    <property type="evidence" value="ECO:0007669"/>
    <property type="project" value="EnsemblMetazoa"/>
</dbReference>
<dbReference type="GO" id="GO:0019901">
    <property type="term" value="F:protein kinase binding"/>
    <property type="evidence" value="ECO:0000250"/>
    <property type="project" value="UniProtKB"/>
</dbReference>
<dbReference type="GO" id="GO:0019903">
    <property type="term" value="F:protein phosphatase binding"/>
    <property type="evidence" value="ECO:0000318"/>
    <property type="project" value="GO_Central"/>
</dbReference>
<dbReference type="GO" id="GO:0043539">
    <property type="term" value="F:protein serine/threonine kinase activator activity"/>
    <property type="evidence" value="ECO:0007669"/>
    <property type="project" value="EnsemblMetazoa"/>
</dbReference>
<dbReference type="GO" id="GO:0003713">
    <property type="term" value="F:transcription coactivator activity"/>
    <property type="evidence" value="ECO:0000318"/>
    <property type="project" value="GO_Central"/>
</dbReference>
<dbReference type="GO" id="GO:0045167">
    <property type="term" value="P:asymmetric protein localization involved in cell fate determination"/>
    <property type="evidence" value="ECO:0007669"/>
    <property type="project" value="EnsemblMetazoa"/>
</dbReference>
<dbReference type="GO" id="GO:0060070">
    <property type="term" value="P:canonical Wnt signaling pathway"/>
    <property type="evidence" value="ECO:0000318"/>
    <property type="project" value="GO_Central"/>
</dbReference>
<dbReference type="GO" id="GO:0098609">
    <property type="term" value="P:cell-cell adhesion"/>
    <property type="evidence" value="ECO:0000318"/>
    <property type="project" value="GO_Central"/>
</dbReference>
<dbReference type="GO" id="GO:0009792">
    <property type="term" value="P:embryo development ending in birth or egg hatching"/>
    <property type="evidence" value="ECO:0007669"/>
    <property type="project" value="EnsemblMetazoa"/>
</dbReference>
<dbReference type="GO" id="GO:0010172">
    <property type="term" value="P:embryonic body morphogenesis"/>
    <property type="evidence" value="ECO:0007669"/>
    <property type="project" value="EnsemblMetazoa"/>
</dbReference>
<dbReference type="GO" id="GO:0007492">
    <property type="term" value="P:endoderm development"/>
    <property type="evidence" value="ECO:0000250"/>
    <property type="project" value="UniProtKB"/>
</dbReference>
<dbReference type="GO" id="GO:0001714">
    <property type="term" value="P:endodermal cell fate specification"/>
    <property type="evidence" value="ECO:0007669"/>
    <property type="project" value="EnsemblMetazoa"/>
</dbReference>
<dbReference type="GO" id="GO:0000132">
    <property type="term" value="P:establishment of mitotic spindle orientation"/>
    <property type="evidence" value="ECO:0007669"/>
    <property type="project" value="EnsemblMetazoa"/>
</dbReference>
<dbReference type="GO" id="GO:0070986">
    <property type="term" value="P:left/right axis specification"/>
    <property type="evidence" value="ECO:0007669"/>
    <property type="project" value="EnsemblMetazoa"/>
</dbReference>
<dbReference type="GO" id="GO:0051782">
    <property type="term" value="P:negative regulation of cell division"/>
    <property type="evidence" value="ECO:0007669"/>
    <property type="project" value="EnsemblMetazoa"/>
</dbReference>
<dbReference type="GO" id="GO:0043433">
    <property type="term" value="P:negative regulation of DNA-binding transcription factor activity"/>
    <property type="evidence" value="ECO:0000250"/>
    <property type="project" value="UniProtKB"/>
</dbReference>
<dbReference type="GO" id="GO:0009949">
    <property type="term" value="P:polarity specification of anterior/posterior axis"/>
    <property type="evidence" value="ECO:0007669"/>
    <property type="project" value="EnsemblMetazoa"/>
</dbReference>
<dbReference type="GO" id="GO:0010085">
    <property type="term" value="P:polarity specification of proximal/distal axis"/>
    <property type="evidence" value="ECO:0007669"/>
    <property type="project" value="EnsemblMetazoa"/>
</dbReference>
<dbReference type="GO" id="GO:1904787">
    <property type="term" value="P:positive regulation of asymmetric protein localization involved in cell fate determination"/>
    <property type="evidence" value="ECO:0007669"/>
    <property type="project" value="EnsemblMetazoa"/>
</dbReference>
<dbReference type="GO" id="GO:0051781">
    <property type="term" value="P:positive regulation of cell division"/>
    <property type="evidence" value="ECO:0007669"/>
    <property type="project" value="EnsemblMetazoa"/>
</dbReference>
<dbReference type="GO" id="GO:1900182">
    <property type="term" value="P:positive regulation of protein localization to nucleus"/>
    <property type="evidence" value="ECO:0007669"/>
    <property type="project" value="EnsemblMetazoa"/>
</dbReference>
<dbReference type="GO" id="GO:0031334">
    <property type="term" value="P:positive regulation of protein-containing complex assembly"/>
    <property type="evidence" value="ECO:0007669"/>
    <property type="project" value="EnsemblMetazoa"/>
</dbReference>
<dbReference type="GO" id="GO:0045944">
    <property type="term" value="P:positive regulation of transcription by RNA polymerase II"/>
    <property type="evidence" value="ECO:0000318"/>
    <property type="project" value="GO_Central"/>
</dbReference>
<dbReference type="GO" id="GO:0045995">
    <property type="term" value="P:regulation of embryonic development"/>
    <property type="evidence" value="ECO:0000250"/>
    <property type="project" value="UniProtKB"/>
</dbReference>
<dbReference type="FunFam" id="1.25.10.10:FF:001287">
    <property type="entry name" value="Armadillo repeat-containing protein wrm-1"/>
    <property type="match status" value="1"/>
</dbReference>
<dbReference type="Gene3D" id="1.25.10.10">
    <property type="entry name" value="Leucine-rich Repeat Variant"/>
    <property type="match status" value="1"/>
</dbReference>
<dbReference type="InterPro" id="IPR011989">
    <property type="entry name" value="ARM-like"/>
</dbReference>
<dbReference type="InterPro" id="IPR016024">
    <property type="entry name" value="ARM-type_fold"/>
</dbReference>
<dbReference type="InterPro" id="IPR000225">
    <property type="entry name" value="Armadillo"/>
</dbReference>
<dbReference type="InterPro" id="IPR013284">
    <property type="entry name" value="Beta-catenin"/>
</dbReference>
<dbReference type="PANTHER" id="PTHR45976">
    <property type="entry name" value="ARMADILLO SEGMENT POLARITY PROTEIN"/>
    <property type="match status" value="1"/>
</dbReference>
<dbReference type="SUPFAM" id="SSF48371">
    <property type="entry name" value="ARM repeat"/>
    <property type="match status" value="1"/>
</dbReference>
<dbReference type="PROSITE" id="PS50176">
    <property type="entry name" value="ARM_REPEAT"/>
    <property type="match status" value="1"/>
</dbReference>
<organism>
    <name type="scientific">Caenorhabditis briggsae</name>
    <dbReference type="NCBI Taxonomy" id="6238"/>
    <lineage>
        <taxon>Eukaryota</taxon>
        <taxon>Metazoa</taxon>
        <taxon>Ecdysozoa</taxon>
        <taxon>Nematoda</taxon>
        <taxon>Chromadorea</taxon>
        <taxon>Rhabditida</taxon>
        <taxon>Rhabditina</taxon>
        <taxon>Rhabditomorpha</taxon>
        <taxon>Rhabditoidea</taxon>
        <taxon>Rhabditidae</taxon>
        <taxon>Peloderinae</taxon>
        <taxon>Caenorhabditis</taxon>
    </lineage>
</organism>
<comment type="function">
    <text evidence="1">Antagonistic role in the Wnt signaling pathway that operates in embryogenesis (By similarity). When located at the cortex it has been shown to inhibit Wnt signaling during asymmetric cell division but when relocated to the nucleus it shows positive regulation (By similarity). Has a role in blastomere signaling during endoderm specification (By similarity). Component of the beta-catenin-lit-1 complex which promotes phosphorylation, down-regulation and subcellular relocation of pop-1 (By similarity). Within the complex, activates lit-1-dependent kinase activity (By similarity). Can substitute for bar-1 indicating functional redundancy (By similarity). Appears to have a role in centrosome positioning (By similarity). Involved in the development of distal tip cells (DTC) by regulating the asymmetric distribution of cye-1 and cki-1 between the daughters of Z1.a and Z4.p cells (By similarity).</text>
</comment>
<comment type="subunit">
    <text evidence="1">Interacts (independently of ARM repeat) with nhr-25 (By similarity). Component of the beta-catenin-lit-1 complex (also called the lit-1/wrm-1 complex or the wrm-1/lit-1 kinase complex) at least composed of lit-1 and wrm-1 (By similarity). Interacts (via N-terminus) with lit-1; the interaction is direct and activates lit-1 kinase activity which leads to the phosphorylation of pop-1 (By similarity). This promotes pop-1 interaction with par-5 and translocation of pop-1 from the nucleus to the cytoplasm (By similarity).</text>
</comment>
<comment type="subcellular location">
    <subcellularLocation>
        <location evidence="1">Cytoplasm</location>
        <location evidence="1">Cell cortex</location>
    </subcellularLocation>
    <subcellularLocation>
        <location evidence="1">Nucleus</location>
    </subcellularLocation>
    <text evidence="1">Located in the anterior cell cortex before and during asymmetric cell division. After division, located preferentially in the nucleus of the posterior daughter cell (By similarity).</text>
</comment>
<protein>
    <recommendedName>
        <fullName>Armadillo repeat-containing protein wrm-1</fullName>
    </recommendedName>
    <alternativeName>
        <fullName>Worm armadillo protein 1</fullName>
    </alternativeName>
</protein>
<accession>A8X811</accession>